<accession>Q3JDL8</accession>
<name>SPEE_NITOC</name>
<comment type="function">
    <text evidence="1">Catalyzes the irreversible transfer of a propylamine group from the amino donor S-adenosylmethioninamine (decarboxy-AdoMet) to putrescine (1,4-diaminobutane) to yield spermidine.</text>
</comment>
<comment type="catalytic activity">
    <reaction evidence="1">
        <text>S-adenosyl 3-(methylsulfanyl)propylamine + putrescine = S-methyl-5'-thioadenosine + spermidine + H(+)</text>
        <dbReference type="Rhea" id="RHEA:12721"/>
        <dbReference type="ChEBI" id="CHEBI:15378"/>
        <dbReference type="ChEBI" id="CHEBI:17509"/>
        <dbReference type="ChEBI" id="CHEBI:57443"/>
        <dbReference type="ChEBI" id="CHEBI:57834"/>
        <dbReference type="ChEBI" id="CHEBI:326268"/>
        <dbReference type="EC" id="2.5.1.16"/>
    </reaction>
</comment>
<comment type="pathway">
    <text evidence="1">Amine and polyamine biosynthesis; spermidine biosynthesis; spermidine from putrescine: step 1/1.</text>
</comment>
<comment type="subunit">
    <text evidence="1">Homodimer or homotetramer.</text>
</comment>
<comment type="subcellular location">
    <subcellularLocation>
        <location evidence="1">Cytoplasm</location>
    </subcellularLocation>
</comment>
<comment type="similarity">
    <text evidence="1">Belongs to the spermidine/spermine synthase family.</text>
</comment>
<dbReference type="EC" id="2.5.1.16" evidence="1"/>
<dbReference type="EMBL" id="CP000127">
    <property type="protein sequence ID" value="ABA57078.1"/>
    <property type="molecule type" value="Genomic_DNA"/>
</dbReference>
<dbReference type="RefSeq" id="WP_002813532.1">
    <property type="nucleotide sequence ID" value="NC_007484.1"/>
</dbReference>
<dbReference type="SMR" id="Q3JDL8"/>
<dbReference type="FunCoup" id="Q3JDL8">
    <property type="interactions" value="433"/>
</dbReference>
<dbReference type="STRING" id="323261.Noc_0558"/>
<dbReference type="KEGG" id="noc:Noc_0558"/>
<dbReference type="eggNOG" id="COG0421">
    <property type="taxonomic scope" value="Bacteria"/>
</dbReference>
<dbReference type="HOGENOM" id="CLU_048199_0_0_6"/>
<dbReference type="InParanoid" id="Q3JDL8"/>
<dbReference type="UniPathway" id="UPA00248">
    <property type="reaction ID" value="UER00314"/>
</dbReference>
<dbReference type="Proteomes" id="UP000006838">
    <property type="component" value="Chromosome"/>
</dbReference>
<dbReference type="GO" id="GO:0005829">
    <property type="term" value="C:cytosol"/>
    <property type="evidence" value="ECO:0007669"/>
    <property type="project" value="TreeGrafter"/>
</dbReference>
<dbReference type="GO" id="GO:0004766">
    <property type="term" value="F:spermidine synthase activity"/>
    <property type="evidence" value="ECO:0007669"/>
    <property type="project" value="UniProtKB-UniRule"/>
</dbReference>
<dbReference type="GO" id="GO:0008295">
    <property type="term" value="P:spermidine biosynthetic process"/>
    <property type="evidence" value="ECO:0007669"/>
    <property type="project" value="UniProtKB-UniRule"/>
</dbReference>
<dbReference type="Gene3D" id="2.30.140.10">
    <property type="entry name" value="Spermidine synthase, tetramerisation domain"/>
    <property type="match status" value="1"/>
</dbReference>
<dbReference type="Gene3D" id="3.40.50.150">
    <property type="entry name" value="Vaccinia Virus protein VP39"/>
    <property type="match status" value="1"/>
</dbReference>
<dbReference type="HAMAP" id="MF_00198">
    <property type="entry name" value="Spermidine_synth"/>
    <property type="match status" value="1"/>
</dbReference>
<dbReference type="InterPro" id="IPR030374">
    <property type="entry name" value="PABS"/>
</dbReference>
<dbReference type="InterPro" id="IPR030373">
    <property type="entry name" value="PABS_CS"/>
</dbReference>
<dbReference type="InterPro" id="IPR029063">
    <property type="entry name" value="SAM-dependent_MTases_sf"/>
</dbReference>
<dbReference type="InterPro" id="IPR001045">
    <property type="entry name" value="Spermi_synthase"/>
</dbReference>
<dbReference type="InterPro" id="IPR035246">
    <property type="entry name" value="Spermidine_synt_N"/>
</dbReference>
<dbReference type="InterPro" id="IPR037163">
    <property type="entry name" value="Spermidine_synt_N_sf"/>
</dbReference>
<dbReference type="NCBIfam" id="NF002010">
    <property type="entry name" value="PRK00811.1"/>
    <property type="match status" value="1"/>
</dbReference>
<dbReference type="NCBIfam" id="TIGR00417">
    <property type="entry name" value="speE"/>
    <property type="match status" value="1"/>
</dbReference>
<dbReference type="PANTHER" id="PTHR11558:SF11">
    <property type="entry name" value="SPERMIDINE SYNTHASE"/>
    <property type="match status" value="1"/>
</dbReference>
<dbReference type="PANTHER" id="PTHR11558">
    <property type="entry name" value="SPERMIDINE/SPERMINE SYNTHASE"/>
    <property type="match status" value="1"/>
</dbReference>
<dbReference type="Pfam" id="PF17284">
    <property type="entry name" value="Spermine_synt_N"/>
    <property type="match status" value="1"/>
</dbReference>
<dbReference type="Pfam" id="PF01564">
    <property type="entry name" value="Spermine_synth"/>
    <property type="match status" value="1"/>
</dbReference>
<dbReference type="SUPFAM" id="SSF53335">
    <property type="entry name" value="S-adenosyl-L-methionine-dependent methyltransferases"/>
    <property type="match status" value="1"/>
</dbReference>
<dbReference type="PROSITE" id="PS01330">
    <property type="entry name" value="PABS_1"/>
    <property type="match status" value="1"/>
</dbReference>
<dbReference type="PROSITE" id="PS51006">
    <property type="entry name" value="PABS_2"/>
    <property type="match status" value="1"/>
</dbReference>
<evidence type="ECO:0000255" key="1">
    <source>
        <dbReference type="HAMAP-Rule" id="MF_00198"/>
    </source>
</evidence>
<reference key="1">
    <citation type="journal article" date="2006" name="Appl. Environ. Microbiol.">
        <title>Complete genome sequence of the marine, chemolithoautotrophic, ammonia-oxidizing bacterium Nitrosococcus oceani ATCC 19707.</title>
        <authorList>
            <person name="Klotz M.G."/>
            <person name="Arp D.J."/>
            <person name="Chain P.S.G."/>
            <person name="El-Sheikh A.F."/>
            <person name="Hauser L.J."/>
            <person name="Hommes N.G."/>
            <person name="Larimer F.W."/>
            <person name="Malfatti S.A."/>
            <person name="Norton J.M."/>
            <person name="Poret-Peterson A.T."/>
            <person name="Vergez L.M."/>
            <person name="Ward B.B."/>
        </authorList>
    </citation>
    <scope>NUCLEOTIDE SEQUENCE [LARGE SCALE GENOMIC DNA]</scope>
    <source>
        <strain>ATCC 19707 / BCRC 17464 / JCM 30415 / NCIMB 11848 / C-107</strain>
    </source>
</reference>
<feature type="chain" id="PRO_1000197477" description="Polyamine aminopropyltransferase">
    <location>
        <begin position="1"/>
        <end position="284"/>
    </location>
</feature>
<feature type="domain" description="PABS" evidence="1">
    <location>
        <begin position="6"/>
        <end position="242"/>
    </location>
</feature>
<feature type="active site" description="Proton acceptor" evidence="1">
    <location>
        <position position="161"/>
    </location>
</feature>
<feature type="binding site" evidence="1">
    <location>
        <position position="36"/>
    </location>
    <ligand>
        <name>S-methyl-5'-thioadenosine</name>
        <dbReference type="ChEBI" id="CHEBI:17509"/>
    </ligand>
</feature>
<feature type="binding site" evidence="1">
    <location>
        <position position="67"/>
    </location>
    <ligand>
        <name>spermidine</name>
        <dbReference type="ChEBI" id="CHEBI:57834"/>
    </ligand>
</feature>
<feature type="binding site" evidence="1">
    <location>
        <position position="91"/>
    </location>
    <ligand>
        <name>spermidine</name>
        <dbReference type="ChEBI" id="CHEBI:57834"/>
    </ligand>
</feature>
<feature type="binding site" evidence="1">
    <location>
        <position position="111"/>
    </location>
    <ligand>
        <name>S-methyl-5'-thioadenosine</name>
        <dbReference type="ChEBI" id="CHEBI:17509"/>
    </ligand>
</feature>
<feature type="binding site" evidence="1">
    <location>
        <begin position="142"/>
        <end position="143"/>
    </location>
    <ligand>
        <name>S-methyl-5'-thioadenosine</name>
        <dbReference type="ChEBI" id="CHEBI:17509"/>
    </ligand>
</feature>
<feature type="binding site" evidence="1">
    <location>
        <begin position="161"/>
        <end position="164"/>
    </location>
    <ligand>
        <name>spermidine</name>
        <dbReference type="ChEBI" id="CHEBI:57834"/>
    </ligand>
</feature>
<organism>
    <name type="scientific">Nitrosococcus oceani (strain ATCC 19707 / BCRC 17464 / JCM 30415 / NCIMB 11848 / C-107)</name>
    <dbReference type="NCBI Taxonomy" id="323261"/>
    <lineage>
        <taxon>Bacteria</taxon>
        <taxon>Pseudomonadati</taxon>
        <taxon>Pseudomonadota</taxon>
        <taxon>Gammaproteobacteria</taxon>
        <taxon>Chromatiales</taxon>
        <taxon>Chromatiaceae</taxon>
        <taxon>Nitrosococcus</taxon>
    </lineage>
</organism>
<sequence length="284" mass="32286">MQLDPKGWFTEVCKEGGLAFSLAIREKLHAETTPYQYIEIYQTETFGRLMVIDGFIMLSGRDNFFYHEMMAHPVLFTHPHPQRVLIIGGGDCGTLREVLKHDVVEKVQQVEIDERVTRLAEKYFPELCQSNDDPRAHFHFGDGLRFVAEAPANSVDVIIIDSTDPIGSAEGLFQASFYADCQRLLGEKGILVHQSESPLIHLDLLNKMRAEMKKGGFPQVRTLTYPQCVYPSGWWSATLAGHTLSCFRERDATAKIFPTRYYNVDIHRASLAVPEFLRQTEESS</sequence>
<gene>
    <name evidence="1" type="primary">speE</name>
    <name type="ordered locus">Noc_0558</name>
</gene>
<keyword id="KW-0963">Cytoplasm</keyword>
<keyword id="KW-0620">Polyamine biosynthesis</keyword>
<keyword id="KW-1185">Reference proteome</keyword>
<keyword id="KW-0745">Spermidine biosynthesis</keyword>
<keyword id="KW-0808">Transferase</keyword>
<protein>
    <recommendedName>
        <fullName evidence="1">Polyamine aminopropyltransferase</fullName>
    </recommendedName>
    <alternativeName>
        <fullName evidence="1">Putrescine aminopropyltransferase</fullName>
        <shortName evidence="1">PAPT</shortName>
    </alternativeName>
    <alternativeName>
        <fullName evidence="1">Spermidine synthase</fullName>
        <shortName evidence="1">SPDS</shortName>
        <shortName evidence="1">SPDSY</shortName>
        <ecNumber evidence="1">2.5.1.16</ecNumber>
    </alternativeName>
</protein>
<proteinExistence type="inferred from homology"/>